<feature type="initiator methionine" description="Removed; by host" evidence="1">
    <location>
        <position position="1"/>
    </location>
</feature>
<feature type="chain" id="PRO_0000421136" description="Pre-core protein X" evidence="1">
    <location>
        <begin position="2"/>
        <end position="80"/>
    </location>
</feature>
<feature type="propeptide" id="PRO_0000421137" evidence="1">
    <location>
        <begin position="2"/>
        <end position="32"/>
    </location>
</feature>
<feature type="peptide" id="PRO_0000421138" description="Core protein X" evidence="1">
    <location>
        <begin position="33"/>
        <end position="51"/>
    </location>
</feature>
<feature type="propeptide" id="PRO_0000421139" evidence="1">
    <location>
        <begin position="52"/>
        <end position="80"/>
    </location>
</feature>
<feature type="region of interest" description="Disordered" evidence="2">
    <location>
        <begin position="18"/>
        <end position="45"/>
    </location>
</feature>
<feature type="compositionally biased region" description="Basic residues" evidence="2">
    <location>
        <begin position="34"/>
        <end position="45"/>
    </location>
</feature>
<feature type="site" description="Cleavage; by viral protease" evidence="1">
    <location>
        <begin position="32"/>
        <end position="33"/>
    </location>
</feature>
<feature type="site" description="Cleavage; by viral protease" evidence="1">
    <location>
        <begin position="51"/>
        <end position="52"/>
    </location>
</feature>
<reference key="1">
    <citation type="journal article" date="1992" name="Virology">
        <title>The sequence of the genome of adenovirus type 5 and its comparison with the genome of adenovirus type 2.</title>
        <authorList>
            <person name="Chroboczek J."/>
            <person name="Bieber F."/>
            <person name="Jacrot B."/>
        </authorList>
    </citation>
    <scope>NUCLEOTIDE SEQUENCE [GENOMIC DNA]</scope>
</reference>
<reference key="2">
    <citation type="journal article" date="2006" name="Genome Res.">
        <title>Broad-spectrum respiratory tract pathogen identification using resequencing DNA microarrays.</title>
        <authorList>
            <person name="Lin B."/>
            <person name="Wang Z."/>
            <person name="Vora G.J."/>
            <person name="Thornton J.A."/>
            <person name="Schnur J.M."/>
            <person name="Thach D.C."/>
            <person name="Blaney K.M."/>
            <person name="Ligler A.G."/>
            <person name="Malanoski A.P."/>
            <person name="Santiago J."/>
            <person name="Walter E.A."/>
            <person name="Agan B.K."/>
            <person name="Metzgar D."/>
            <person name="Seto D."/>
            <person name="Daum L.T."/>
            <person name="Kruzelock R."/>
            <person name="Rowley R.K."/>
            <person name="Hanson E.H."/>
            <person name="Tibbetts C."/>
            <person name="Stenger D.A."/>
        </authorList>
    </citation>
    <scope>NUCLEOTIDE SEQUENCE [GENOMIC DNA]</scope>
    <source>
        <strain>Isolate NHRC Ad5FS 7151</strain>
    </source>
</reference>
<reference key="3">
    <citation type="journal article" date="2012" name="Nat. Methods">
        <title>De novo derivation of proteomes from transcriptomes for transcript and protein identification.</title>
        <authorList>
            <person name="Evans V.C."/>
            <person name="Barker G."/>
            <person name="Heesom K.J."/>
            <person name="Fan J."/>
            <person name="Bessant C."/>
            <person name="Matthews D.A."/>
        </authorList>
    </citation>
    <scope>NUCLEOTIDE SEQUENCE [MRNA]</scope>
</reference>
<reference key="4">
    <citation type="journal article" date="2012" name="Viruses">
        <title>Latest insights on adenovirus structure and assembly.</title>
        <authorList>
            <person name="San Martin C."/>
        </authorList>
    </citation>
    <scope>REVIEW</scope>
</reference>
<reference key="5">
    <citation type="journal article" date="2012" name="Nucleic Acids Res.">
        <title>Chromatin structure of adenovirus DNA throughout infection.</title>
        <authorList>
            <person name="Giberson A.N."/>
            <person name="Davidson A.R."/>
            <person name="Parks R.J."/>
        </authorList>
    </citation>
    <scope>REVIEW</scope>
</reference>
<proteinExistence type="evidence at transcript level"/>
<protein>
    <recommendedName>
        <fullName>Pre-core protein X</fullName>
        <shortName>pX</shortName>
    </recommendedName>
    <alternativeName>
        <fullName>11 kDa core protein</fullName>
    </alternativeName>
    <alternativeName>
        <fullName>Protein mu</fullName>
        <shortName>pMu</shortName>
    </alternativeName>
    <component>
        <recommendedName>
            <fullName>Core protein X</fullName>
        </recommendedName>
    </component>
</protein>
<organismHost>
    <name type="scientific">Homo sapiens</name>
    <name type="common">Human</name>
    <dbReference type="NCBI Taxonomy" id="9606"/>
</organismHost>
<organism>
    <name type="scientific">Human adenovirus C serotype 5</name>
    <name type="common">HAdV-5</name>
    <name type="synonym">Human adenovirus 5</name>
    <dbReference type="NCBI Taxonomy" id="28285"/>
    <lineage>
        <taxon>Viruses</taxon>
        <taxon>Varidnaviria</taxon>
        <taxon>Bamfordvirae</taxon>
        <taxon>Preplasmiviricota</taxon>
        <taxon>Tectiliviricetes</taxon>
        <taxon>Rowavirales</taxon>
        <taxon>Adenoviridae</taxon>
        <taxon>Mastadenovirus</taxon>
        <taxon>Human mastadenovirus C</taxon>
    </lineage>
</organism>
<accession>Q2KS10</accession>
<comment type="function">
    <molecule>Pre-core protein X</molecule>
    <text evidence="1">Interacts with the viral DNA and aids in tightly condensing it within the capsid. Cleavage of pre-core protein X may serve to partially relax this structure within the mature virion prior to its entry into the nucleus (By similarity).</text>
</comment>
<comment type="subunit">
    <text evidence="1">Interacts with the core-capsid bridging protein; this interaction bridges the virus core to the capsid.</text>
</comment>
<comment type="subcellular location">
    <molecule>Pre-core protein X</molecule>
    <subcellularLocation>
        <location evidence="1">Host nucleus</location>
        <location evidence="1">Host nucleolus</location>
    </subcellularLocation>
    <text>Excluded from adenovirus DNA-binding protein (DBP)-rich replication centers in adenovirus-infected cells.</text>
</comment>
<comment type="subcellular location">
    <molecule>Core protein X</molecule>
    <subcellularLocation>
        <location>Virion</location>
    </subcellularLocation>
    <text evidence="1">Located inside the capsid in association with the viral DNA (core). Present in about 126-160 copies per virion. Excluded from adenovirus DNA-binding protein (DBP)-rich replication centers in adenovirus-infected cells (By similarity).</text>
</comment>
<comment type="induction">
    <text>Expressed in the late phase of the viral replicative cycle.</text>
</comment>
<comment type="PTM">
    <text evidence="1">Cleaved by the viral protease during virion maturation to form the mature protein.</text>
</comment>
<comment type="miscellaneous">
    <text evidence="1">All late proteins expressed from the major late promoter are produced by alternative splicing and alternative polyadenylation of the same gene giving rise to non-overlapping ORFs. A leader sequence is present in the N-terminus of all these mRNAs and is recognized by the viral shutoff protein to provide expression although conventional translation via ribosome scanning from the cap has been shut off in the host cell (By similarity).</text>
</comment>
<comment type="similarity">
    <text evidence="3">Belongs to the adenoviridae core protein X family.</text>
</comment>
<gene>
    <name type="ORF">L2</name>
</gene>
<dbReference type="EMBL" id="M73260">
    <property type="status" value="NOT_ANNOTATED_CDS"/>
    <property type="molecule type" value="Genomic_DNA"/>
</dbReference>
<dbReference type="EMBL" id="AY601635">
    <property type="protein sequence ID" value="AAW65512.1"/>
    <property type="molecule type" value="Genomic_DNA"/>
</dbReference>
<dbReference type="RefSeq" id="AP_000209.1">
    <property type="nucleotide sequence ID" value="AC_000008.1"/>
</dbReference>
<dbReference type="Proteomes" id="UP000004992">
    <property type="component" value="Genome"/>
</dbReference>
<dbReference type="Proteomes" id="UP000125273">
    <property type="component" value="Genome"/>
</dbReference>
<dbReference type="GO" id="GO:0044196">
    <property type="term" value="C:host cell nucleolus"/>
    <property type="evidence" value="ECO:0007669"/>
    <property type="project" value="UniProtKB-SubCell"/>
</dbReference>
<dbReference type="GO" id="GO:0019013">
    <property type="term" value="C:viral nucleocapsid"/>
    <property type="evidence" value="ECO:0007669"/>
    <property type="project" value="InterPro"/>
</dbReference>
<dbReference type="GO" id="GO:0003677">
    <property type="term" value="F:DNA binding"/>
    <property type="evidence" value="ECO:0007669"/>
    <property type="project" value="UniProtKB-KW"/>
</dbReference>
<dbReference type="InterPro" id="IPR008393">
    <property type="entry name" value="Adenovirus_late_L2_mu_core"/>
</dbReference>
<dbReference type="Pfam" id="PF05829">
    <property type="entry name" value="Adeno_PX"/>
    <property type="match status" value="1"/>
</dbReference>
<name>COR10_ADE05</name>
<evidence type="ECO:0000250" key="1"/>
<evidence type="ECO:0000256" key="2">
    <source>
        <dbReference type="SAM" id="MobiDB-lite"/>
    </source>
</evidence>
<evidence type="ECO:0000305" key="3"/>
<keyword id="KW-0238">DNA-binding</keyword>
<keyword id="KW-1048">Host nucleus</keyword>
<keyword id="KW-0426">Late protein</keyword>
<keyword id="KW-1185">Reference proteome</keyword>
<keyword id="KW-0946">Virion</keyword>
<sequence length="80" mass="8846">MALTCRLRFPVPGFRGRMHRRRGMAGHGLTGGMRRAHHRRRRASHRRMRGGILPLLIPLIAAAIGAVPGIASVALQAQRH</sequence>